<organism>
    <name type="scientific">Saccharomyces cerevisiae (strain ATCC 204508 / S288c)</name>
    <name type="common">Baker's yeast</name>
    <dbReference type="NCBI Taxonomy" id="559292"/>
    <lineage>
        <taxon>Eukaryota</taxon>
        <taxon>Fungi</taxon>
        <taxon>Dikarya</taxon>
        <taxon>Ascomycota</taxon>
        <taxon>Saccharomycotina</taxon>
        <taxon>Saccharomycetes</taxon>
        <taxon>Saccharomycetales</taxon>
        <taxon>Saccharomycetaceae</taxon>
        <taxon>Saccharomyces</taxon>
    </lineage>
</organism>
<reference key="1">
    <citation type="journal article" date="1997" name="Nature">
        <title>The nucleotide sequence of Saccharomyces cerevisiae chromosome IV.</title>
        <authorList>
            <person name="Jacq C."/>
            <person name="Alt-Moerbe J."/>
            <person name="Andre B."/>
            <person name="Arnold W."/>
            <person name="Bahr A."/>
            <person name="Ballesta J.P.G."/>
            <person name="Bargues M."/>
            <person name="Baron L."/>
            <person name="Becker A."/>
            <person name="Biteau N."/>
            <person name="Bloecker H."/>
            <person name="Blugeon C."/>
            <person name="Boskovic J."/>
            <person name="Brandt P."/>
            <person name="Brueckner M."/>
            <person name="Buitrago M.J."/>
            <person name="Coster F."/>
            <person name="Delaveau T."/>
            <person name="del Rey F."/>
            <person name="Dujon B."/>
            <person name="Eide L.G."/>
            <person name="Garcia-Cantalejo J.M."/>
            <person name="Goffeau A."/>
            <person name="Gomez-Peris A."/>
            <person name="Granotier C."/>
            <person name="Hanemann V."/>
            <person name="Hankeln T."/>
            <person name="Hoheisel J.D."/>
            <person name="Jaeger W."/>
            <person name="Jimenez A."/>
            <person name="Jonniaux J.-L."/>
            <person name="Kraemer C."/>
            <person name="Kuester H."/>
            <person name="Laamanen P."/>
            <person name="Legros Y."/>
            <person name="Louis E.J."/>
            <person name="Moeller-Rieker S."/>
            <person name="Monnet A."/>
            <person name="Moro M."/>
            <person name="Mueller-Auer S."/>
            <person name="Nussbaumer B."/>
            <person name="Paricio N."/>
            <person name="Paulin L."/>
            <person name="Perea J."/>
            <person name="Perez-Alonso M."/>
            <person name="Perez-Ortin J.E."/>
            <person name="Pohl T.M."/>
            <person name="Prydz H."/>
            <person name="Purnelle B."/>
            <person name="Rasmussen S.W."/>
            <person name="Remacha M.A."/>
            <person name="Revuelta J.L."/>
            <person name="Rieger M."/>
            <person name="Salom D."/>
            <person name="Saluz H.P."/>
            <person name="Saiz J.E."/>
            <person name="Saren A.-M."/>
            <person name="Schaefer M."/>
            <person name="Scharfe M."/>
            <person name="Schmidt E.R."/>
            <person name="Schneider C."/>
            <person name="Scholler P."/>
            <person name="Schwarz S."/>
            <person name="Soler-Mira A."/>
            <person name="Urrestarazu L.A."/>
            <person name="Verhasselt P."/>
            <person name="Vissers S."/>
            <person name="Voet M."/>
            <person name="Volckaert G."/>
            <person name="Wagner G."/>
            <person name="Wambutt R."/>
            <person name="Wedler E."/>
            <person name="Wedler H."/>
            <person name="Woelfl S."/>
            <person name="Harris D.E."/>
            <person name="Bowman S."/>
            <person name="Brown D."/>
            <person name="Churcher C.M."/>
            <person name="Connor R."/>
            <person name="Dedman K."/>
            <person name="Gentles S."/>
            <person name="Hamlin N."/>
            <person name="Hunt S."/>
            <person name="Jones L."/>
            <person name="McDonald S."/>
            <person name="Murphy L.D."/>
            <person name="Niblett D."/>
            <person name="Odell C."/>
            <person name="Oliver K."/>
            <person name="Rajandream M.A."/>
            <person name="Richards C."/>
            <person name="Shore L."/>
            <person name="Walsh S.V."/>
            <person name="Barrell B.G."/>
            <person name="Dietrich F.S."/>
            <person name="Mulligan J.T."/>
            <person name="Allen E."/>
            <person name="Araujo R."/>
            <person name="Aviles E."/>
            <person name="Berno A."/>
            <person name="Carpenter J."/>
            <person name="Chen E."/>
            <person name="Cherry J.M."/>
            <person name="Chung E."/>
            <person name="Duncan M."/>
            <person name="Hunicke-Smith S."/>
            <person name="Hyman R.W."/>
            <person name="Komp C."/>
            <person name="Lashkari D."/>
            <person name="Lew H."/>
            <person name="Lin D."/>
            <person name="Mosedale D."/>
            <person name="Nakahara K."/>
            <person name="Namath A."/>
            <person name="Oefner P."/>
            <person name="Oh C."/>
            <person name="Petel F.X."/>
            <person name="Roberts D."/>
            <person name="Schramm S."/>
            <person name="Schroeder M."/>
            <person name="Shogren T."/>
            <person name="Shroff N."/>
            <person name="Winant A."/>
            <person name="Yelton M.A."/>
            <person name="Botstein D."/>
            <person name="Davis R.W."/>
            <person name="Johnston M."/>
            <person name="Andrews S."/>
            <person name="Brinkman R."/>
            <person name="Cooper J."/>
            <person name="Ding H."/>
            <person name="Du Z."/>
            <person name="Favello A."/>
            <person name="Fulton L."/>
            <person name="Gattung S."/>
            <person name="Greco T."/>
            <person name="Hallsworth K."/>
            <person name="Hawkins J."/>
            <person name="Hillier L.W."/>
            <person name="Jier M."/>
            <person name="Johnson D."/>
            <person name="Johnston L."/>
            <person name="Kirsten J."/>
            <person name="Kucaba T."/>
            <person name="Langston Y."/>
            <person name="Latreille P."/>
            <person name="Le T."/>
            <person name="Mardis E."/>
            <person name="Menezes S."/>
            <person name="Miller N."/>
            <person name="Nhan M."/>
            <person name="Pauley A."/>
            <person name="Peluso D."/>
            <person name="Rifkin L."/>
            <person name="Riles L."/>
            <person name="Taich A."/>
            <person name="Trevaskis E."/>
            <person name="Vignati D."/>
            <person name="Wilcox L."/>
            <person name="Wohldman P."/>
            <person name="Vaudin M."/>
            <person name="Wilson R."/>
            <person name="Waterston R."/>
            <person name="Albermann K."/>
            <person name="Hani J."/>
            <person name="Heumann K."/>
            <person name="Kleine K."/>
            <person name="Mewes H.-W."/>
            <person name="Zollner A."/>
            <person name="Zaccaria P."/>
        </authorList>
    </citation>
    <scope>NUCLEOTIDE SEQUENCE [LARGE SCALE GENOMIC DNA]</scope>
    <source>
        <strain>ATCC 204508 / S288c</strain>
    </source>
</reference>
<reference key="2">
    <citation type="journal article" date="2014" name="G3 (Bethesda)">
        <title>The reference genome sequence of Saccharomyces cerevisiae: Then and now.</title>
        <authorList>
            <person name="Engel S.R."/>
            <person name="Dietrich F.S."/>
            <person name="Fisk D.G."/>
            <person name="Binkley G."/>
            <person name="Balakrishnan R."/>
            <person name="Costanzo M.C."/>
            <person name="Dwight S.S."/>
            <person name="Hitz B.C."/>
            <person name="Karra K."/>
            <person name="Nash R.S."/>
            <person name="Weng S."/>
            <person name="Wong E.D."/>
            <person name="Lloyd P."/>
            <person name="Skrzypek M.S."/>
            <person name="Miyasato S.R."/>
            <person name="Simison M."/>
            <person name="Cherry J.M."/>
        </authorList>
    </citation>
    <scope>GENOME REANNOTATION</scope>
    <source>
        <strain>ATCC 204508 / S288c</strain>
    </source>
</reference>
<reference key="3">
    <citation type="journal article" date="2007" name="Genome Res.">
        <title>Approaching a complete repository of sequence-verified protein-encoding clones for Saccharomyces cerevisiae.</title>
        <authorList>
            <person name="Hu Y."/>
            <person name="Rolfs A."/>
            <person name="Bhullar B."/>
            <person name="Murthy T.V.S."/>
            <person name="Zhu C."/>
            <person name="Berger M.F."/>
            <person name="Camargo A.A."/>
            <person name="Kelley F."/>
            <person name="McCarron S."/>
            <person name="Jepson D."/>
            <person name="Richardson A."/>
            <person name="Raphael J."/>
            <person name="Moreira D."/>
            <person name="Taycher E."/>
            <person name="Zuo D."/>
            <person name="Mohr S."/>
            <person name="Kane M.F."/>
            <person name="Williamson J."/>
            <person name="Simpson A.J.G."/>
            <person name="Bulyk M.L."/>
            <person name="Harlow E."/>
            <person name="Marsischky G."/>
            <person name="Kolodner R.D."/>
            <person name="LaBaer J."/>
        </authorList>
    </citation>
    <scope>NUCLEOTIDE SEQUENCE [GENOMIC DNA]</scope>
    <source>
        <strain>ATCC 204508 / S288c</strain>
    </source>
</reference>
<reference key="4">
    <citation type="journal article" date="2003" name="Nature">
        <title>Global analysis of protein localization in budding yeast.</title>
        <authorList>
            <person name="Huh W.-K."/>
            <person name="Falvo J.V."/>
            <person name="Gerke L.C."/>
            <person name="Carroll A.S."/>
            <person name="Howson R.W."/>
            <person name="Weissman J.S."/>
            <person name="O'Shea E.K."/>
        </authorList>
    </citation>
    <scope>SUBCELLULAR LOCATION [LARGE SCALE ANALYSIS]</scope>
</reference>
<reference key="5">
    <citation type="journal article" date="2003" name="Nature">
        <title>Global analysis of protein expression in yeast.</title>
        <authorList>
            <person name="Ghaemmaghami S."/>
            <person name="Huh W.-K."/>
            <person name="Bower K."/>
            <person name="Howson R.W."/>
            <person name="Belle A."/>
            <person name="Dephoure N."/>
            <person name="O'Shea E.K."/>
            <person name="Weissman J.S."/>
        </authorList>
    </citation>
    <scope>LEVEL OF PROTEIN EXPRESSION [LARGE SCALE ANALYSIS]</scope>
</reference>
<reference key="6">
    <citation type="journal article" date="2003" name="Proc. Natl. Acad. Sci. U.S.A.">
        <title>The proteome of Saccharomyces cerevisiae mitochondria.</title>
        <authorList>
            <person name="Sickmann A."/>
            <person name="Reinders J."/>
            <person name="Wagner Y."/>
            <person name="Joppich C."/>
            <person name="Zahedi R.P."/>
            <person name="Meyer H.E."/>
            <person name="Schoenfisch B."/>
            <person name="Perschil I."/>
            <person name="Chacinska A."/>
            <person name="Guiard B."/>
            <person name="Rehling P."/>
            <person name="Pfanner N."/>
            <person name="Meisinger C."/>
        </authorList>
    </citation>
    <scope>SUBCELLULAR LOCATION [LARGE SCALE ANALYSIS]</scope>
    <source>
        <strain>ATCC 76625 / YPH499</strain>
    </source>
</reference>
<reference key="7">
    <citation type="journal article" date="2009" name="PLoS Genet.">
        <title>Computationally driven, quantitative experiments discover genes required for mitochondrial biogenesis.</title>
        <authorList>
            <person name="Hess D.C."/>
            <person name="Myers C.L."/>
            <person name="Huttenhower C."/>
            <person name="Hibbs M.A."/>
            <person name="Hayes A.P."/>
            <person name="Paw J."/>
            <person name="Clore J.J."/>
            <person name="Mendoza R.M."/>
            <person name="Luis B.S."/>
            <person name="Nislow C."/>
            <person name="Giaever G."/>
            <person name="Costanzo M."/>
            <person name="Troyanskaya O.G."/>
            <person name="Caudy A.A."/>
        </authorList>
    </citation>
    <scope>DISRUPTION PHENOTYPE</scope>
</reference>
<reference key="8">
    <citation type="journal article" date="2010" name="J. Biol. Chem.">
        <title>Mzm1 influences a labile pool of mitochondrial zinc important for respiratory function.</title>
        <authorList>
            <person name="Atkinson A."/>
            <person name="Khalimonchuk O."/>
            <person name="Smith P."/>
            <person name="Sabic H."/>
            <person name="Eide D."/>
            <person name="Winge D.R."/>
        </authorList>
    </citation>
    <scope>FUNCTION</scope>
    <scope>SUBCELLULAR LOCATION</scope>
</reference>
<reference key="9">
    <citation type="journal article" date="2011" name="Mol. Cell. Biol.">
        <title>The LYR protein Mzm1 functions in the insertion of the Rieske Fe/S protein in yeast mitochondria.</title>
        <authorList>
            <person name="Atkinson A."/>
            <person name="Smith P."/>
            <person name="Fox J.L."/>
            <person name="Cui T.Z."/>
            <person name="Khalimonchuk O."/>
            <person name="Winge D.R."/>
        </authorList>
    </citation>
    <scope>FUNCTION</scope>
    <scope>SUBCELLULAR LOCATION</scope>
</reference>
<protein>
    <recommendedName>
        <fullName>Mitochondrial zinc maintenance protein 1, mitochondrial</fullName>
    </recommendedName>
    <alternativeName>
        <fullName>Altered inheritance of mitochondria protein 8</fullName>
    </alternativeName>
    <alternativeName>
        <fullName>Found in mitochondrial proteome protein 36</fullName>
    </alternativeName>
</protein>
<keyword id="KW-0143">Chaperone</keyword>
<keyword id="KW-0496">Mitochondrion</keyword>
<keyword id="KW-1185">Reference proteome</keyword>
<keyword id="KW-0809">Transit peptide</keyword>
<name>MZM1_YEAST</name>
<dbReference type="EMBL" id="U33050">
    <property type="protein sequence ID" value="AAB64909.1"/>
    <property type="molecule type" value="Genomic_DNA"/>
</dbReference>
<dbReference type="EMBL" id="AY558528">
    <property type="protein sequence ID" value="AAS56854.1"/>
    <property type="molecule type" value="Genomic_DNA"/>
</dbReference>
<dbReference type="EMBL" id="BK006938">
    <property type="protein sequence ID" value="DAA12325.1"/>
    <property type="molecule type" value="Genomic_DNA"/>
</dbReference>
<dbReference type="PIR" id="S69660">
    <property type="entry name" value="S69660"/>
</dbReference>
<dbReference type="RefSeq" id="NP_010781.1">
    <property type="nucleotide sequence ID" value="NM_001180801.1"/>
</dbReference>
<dbReference type="SMR" id="Q03429"/>
<dbReference type="BioGRID" id="32544">
    <property type="interactions" value="100"/>
</dbReference>
<dbReference type="FunCoup" id="Q03429">
    <property type="interactions" value="36"/>
</dbReference>
<dbReference type="IntAct" id="Q03429">
    <property type="interactions" value="2"/>
</dbReference>
<dbReference type="STRING" id="4932.YDR493W"/>
<dbReference type="PaxDb" id="4932-YDR493W"/>
<dbReference type="PeptideAtlas" id="Q03429"/>
<dbReference type="DNASU" id="852104"/>
<dbReference type="EnsemblFungi" id="YDR493W_mRNA">
    <property type="protein sequence ID" value="YDR493W"/>
    <property type="gene ID" value="YDR493W"/>
</dbReference>
<dbReference type="GeneID" id="852104"/>
<dbReference type="KEGG" id="sce:YDR493W"/>
<dbReference type="AGR" id="SGD:S000002901"/>
<dbReference type="SGD" id="S000002901">
    <property type="gene designation" value="MZM1"/>
</dbReference>
<dbReference type="VEuPathDB" id="FungiDB:YDR493W"/>
<dbReference type="eggNOG" id="ENOG502S6EF">
    <property type="taxonomic scope" value="Eukaryota"/>
</dbReference>
<dbReference type="HOGENOM" id="CLU_147114_2_2_1"/>
<dbReference type="InParanoid" id="Q03429"/>
<dbReference type="OMA" id="KYKLRIH"/>
<dbReference type="OrthoDB" id="529194at2759"/>
<dbReference type="BioCyc" id="YEAST:G3O-30016-MONOMER"/>
<dbReference type="Reactome" id="R-SCE-9865881">
    <property type="pathway name" value="Complex III assembly"/>
</dbReference>
<dbReference type="BioGRID-ORCS" id="852104">
    <property type="hits" value="0 hits in 10 CRISPR screens"/>
</dbReference>
<dbReference type="PRO" id="PR:Q03429"/>
<dbReference type="Proteomes" id="UP000002311">
    <property type="component" value="Chromosome IV"/>
</dbReference>
<dbReference type="RNAct" id="Q03429">
    <property type="molecule type" value="protein"/>
</dbReference>
<dbReference type="GO" id="GO:0005759">
    <property type="term" value="C:mitochondrial matrix"/>
    <property type="evidence" value="ECO:0000314"/>
    <property type="project" value="SGD"/>
</dbReference>
<dbReference type="GO" id="GO:0005739">
    <property type="term" value="C:mitochondrion"/>
    <property type="evidence" value="ECO:0000314"/>
    <property type="project" value="SGD"/>
</dbReference>
<dbReference type="GO" id="GO:0044183">
    <property type="term" value="F:protein folding chaperone"/>
    <property type="evidence" value="ECO:0000315"/>
    <property type="project" value="SGD"/>
</dbReference>
<dbReference type="GO" id="GO:0034551">
    <property type="term" value="P:mitochondrial respiratory chain complex III assembly"/>
    <property type="evidence" value="ECO:0000315"/>
    <property type="project" value="SGD"/>
</dbReference>
<dbReference type="CDD" id="cd20267">
    <property type="entry name" value="Complex1_LYR_LYRM7"/>
    <property type="match status" value="1"/>
</dbReference>
<dbReference type="InterPro" id="IPR045298">
    <property type="entry name" value="Complex1_LYR_LYRM7"/>
</dbReference>
<dbReference type="InterPro" id="IPR050435">
    <property type="entry name" value="MZM1/LYRM7"/>
</dbReference>
<dbReference type="PANTHER" id="PTHR46749">
    <property type="entry name" value="COMPLEX III ASSEMBLY FACTOR LYRM7"/>
    <property type="match status" value="1"/>
</dbReference>
<dbReference type="PANTHER" id="PTHR46749:SF1">
    <property type="entry name" value="COMPLEX III ASSEMBLY FACTOR LYRM7"/>
    <property type="match status" value="1"/>
</dbReference>
<gene>
    <name type="primary">MZM1</name>
    <name type="synonym">AIM8</name>
    <name type="synonym">FMP36</name>
    <name type="ordered locus">YDR493W</name>
</gene>
<proteinExistence type="evidence at protein level"/>
<feature type="transit peptide" description="Mitochondrion" evidence="1">
    <location>
        <begin position="1"/>
        <end position="24"/>
    </location>
</feature>
<feature type="chain" id="PRO_0000253826" description="Mitochondrial zinc maintenance protein 1, mitochondrial">
    <location>
        <begin position="25"/>
        <end position="123"/>
    </location>
</feature>
<comment type="function">
    <text evidence="6 7">Assembly factor required for Rieske Fe-S protein RIP1 incorporation into the cytochrome b-c1 (CIII) complex. Functions as a chaperone, binding to this subunit within the mitochondrial matrix and stabilizing it prior to its translocation and insertion into the late CIII dimeric intermediate within the mitochondrial inner membrane. Modulates the mitochondrial matrix zinc pool.</text>
</comment>
<comment type="subunit">
    <text>Interacts with RIP1.</text>
</comment>
<comment type="subcellular location">
    <subcellularLocation>
        <location evidence="2 4 6 7">Mitochondrion matrix</location>
    </subcellularLocation>
</comment>
<comment type="disruption phenotype">
    <text evidence="5">Leads to respiratory growth defect and increases frequency of mitochondrial genome loss.</text>
</comment>
<comment type="miscellaneous">
    <text evidence="3">Present with 279 molecules/cell in log phase SD medium.</text>
</comment>
<comment type="similarity">
    <text evidence="8">Belongs to the complex I LYR family. MZM1 subfamily.</text>
</comment>
<evidence type="ECO:0000255" key="1"/>
<evidence type="ECO:0000269" key="2">
    <source>
    </source>
</evidence>
<evidence type="ECO:0000269" key="3">
    <source>
    </source>
</evidence>
<evidence type="ECO:0000269" key="4">
    <source>
    </source>
</evidence>
<evidence type="ECO:0000269" key="5">
    <source>
    </source>
</evidence>
<evidence type="ECO:0000269" key="6">
    <source>
    </source>
</evidence>
<evidence type="ECO:0000269" key="7">
    <source>
    </source>
</evidence>
<evidence type="ECO:0000305" key="8"/>
<accession>Q03429</accession>
<accession>D6VTB5</accession>
<sequence length="123" mass="13927">MSTRTKALNAYRHGLRATRIAFRNDAEVLLAARAKMRSGMLCPPDPKLTTEDQIQHLEDVAVFLRRNLVQGKKVDGSSTKEPRYHLNIHKDTELGDNETIADPTARVKTNLKARPFKCSDKKQ</sequence>